<protein>
    <recommendedName>
        <fullName evidence="1">LexA repressor</fullName>
        <ecNumber evidence="1">3.4.21.88</ecNumber>
    </recommendedName>
</protein>
<proteinExistence type="inferred from homology"/>
<sequence>MRPLTPRQAEILELIKRNIADTGMPPTRAEIARRLGFKSANAAEEHLKALAKKGCIEIMPGTSRGIKLTQESTEEPDLGLPLIGQVAAGEPILAQEHVEQHYKVDPAMFRPSADFLLRVRGDSMKNIGILEGDLLAVHKIEQARNGQIVVARVEDDVTVKRFEKKGNKVFLHAENEDYSPIEVDLANQSLSIEGLAVGVIRNGDWQ</sequence>
<gene>
    <name evidence="1" type="primary">lexA</name>
    <name type="ordered locus">Spea_3997</name>
</gene>
<feature type="chain" id="PRO_1000074066" description="LexA repressor">
    <location>
        <begin position="1"/>
        <end position="206"/>
    </location>
</feature>
<feature type="DNA-binding region" description="H-T-H motif" evidence="1">
    <location>
        <begin position="28"/>
        <end position="48"/>
    </location>
</feature>
<feature type="active site" description="For autocatalytic cleavage activity" evidence="1">
    <location>
        <position position="123"/>
    </location>
</feature>
<feature type="active site" description="For autocatalytic cleavage activity" evidence="1">
    <location>
        <position position="160"/>
    </location>
</feature>
<feature type="site" description="Cleavage; by autolysis" evidence="1">
    <location>
        <begin position="88"/>
        <end position="89"/>
    </location>
</feature>
<keyword id="KW-0068">Autocatalytic cleavage</keyword>
<keyword id="KW-0227">DNA damage</keyword>
<keyword id="KW-0234">DNA repair</keyword>
<keyword id="KW-0235">DNA replication</keyword>
<keyword id="KW-0238">DNA-binding</keyword>
<keyword id="KW-0378">Hydrolase</keyword>
<keyword id="KW-1185">Reference proteome</keyword>
<keyword id="KW-0678">Repressor</keyword>
<keyword id="KW-0742">SOS response</keyword>
<keyword id="KW-0804">Transcription</keyword>
<keyword id="KW-0805">Transcription regulation</keyword>
<reference key="1">
    <citation type="submission" date="2007-10" db="EMBL/GenBank/DDBJ databases">
        <title>Complete sequence of Shewanella pealeana ATCC 700345.</title>
        <authorList>
            <consortium name="US DOE Joint Genome Institute"/>
            <person name="Copeland A."/>
            <person name="Lucas S."/>
            <person name="Lapidus A."/>
            <person name="Barry K."/>
            <person name="Glavina del Rio T."/>
            <person name="Dalin E."/>
            <person name="Tice H."/>
            <person name="Pitluck S."/>
            <person name="Chertkov O."/>
            <person name="Brettin T."/>
            <person name="Bruce D."/>
            <person name="Detter J.C."/>
            <person name="Han C."/>
            <person name="Schmutz J."/>
            <person name="Larimer F."/>
            <person name="Land M."/>
            <person name="Hauser L."/>
            <person name="Kyrpides N."/>
            <person name="Kim E."/>
            <person name="Zhao J.-S.Z."/>
            <person name="Manno D."/>
            <person name="Hawari J."/>
            <person name="Richardson P."/>
        </authorList>
    </citation>
    <scope>NUCLEOTIDE SEQUENCE [LARGE SCALE GENOMIC DNA]</scope>
    <source>
        <strain>ATCC 700345 / ANG-SQ1</strain>
    </source>
</reference>
<comment type="function">
    <text evidence="1">Represses a number of genes involved in the response to DNA damage (SOS response), including recA and lexA. In the presence of single-stranded DNA, RecA interacts with LexA causing an autocatalytic cleavage which disrupts the DNA-binding part of LexA, leading to derepression of the SOS regulon and eventually DNA repair.</text>
</comment>
<comment type="catalytic activity">
    <reaction evidence="1">
        <text>Hydrolysis of Ala-|-Gly bond in repressor LexA.</text>
        <dbReference type="EC" id="3.4.21.88"/>
    </reaction>
</comment>
<comment type="subunit">
    <text evidence="1">Homodimer.</text>
</comment>
<comment type="similarity">
    <text evidence="1">Belongs to the peptidase S24 family.</text>
</comment>
<name>LEXA_SHEPA</name>
<dbReference type="EC" id="3.4.21.88" evidence="1"/>
<dbReference type="EMBL" id="CP000851">
    <property type="protein sequence ID" value="ABV89307.1"/>
    <property type="molecule type" value="Genomic_DNA"/>
</dbReference>
<dbReference type="RefSeq" id="WP_012157187.1">
    <property type="nucleotide sequence ID" value="NC_009901.1"/>
</dbReference>
<dbReference type="SMR" id="A8H9S0"/>
<dbReference type="STRING" id="398579.Spea_3997"/>
<dbReference type="MEROPS" id="S24.001"/>
<dbReference type="KEGG" id="spl:Spea_3997"/>
<dbReference type="eggNOG" id="COG1974">
    <property type="taxonomic scope" value="Bacteria"/>
</dbReference>
<dbReference type="HOGENOM" id="CLU_066192_45_3_6"/>
<dbReference type="OrthoDB" id="9802364at2"/>
<dbReference type="Proteomes" id="UP000002608">
    <property type="component" value="Chromosome"/>
</dbReference>
<dbReference type="GO" id="GO:0003677">
    <property type="term" value="F:DNA binding"/>
    <property type="evidence" value="ECO:0007669"/>
    <property type="project" value="UniProtKB-UniRule"/>
</dbReference>
<dbReference type="GO" id="GO:0004252">
    <property type="term" value="F:serine-type endopeptidase activity"/>
    <property type="evidence" value="ECO:0007669"/>
    <property type="project" value="UniProtKB-UniRule"/>
</dbReference>
<dbReference type="GO" id="GO:0006281">
    <property type="term" value="P:DNA repair"/>
    <property type="evidence" value="ECO:0007669"/>
    <property type="project" value="UniProtKB-UniRule"/>
</dbReference>
<dbReference type="GO" id="GO:0006260">
    <property type="term" value="P:DNA replication"/>
    <property type="evidence" value="ECO:0007669"/>
    <property type="project" value="UniProtKB-UniRule"/>
</dbReference>
<dbReference type="GO" id="GO:0045892">
    <property type="term" value="P:negative regulation of DNA-templated transcription"/>
    <property type="evidence" value="ECO:0007669"/>
    <property type="project" value="UniProtKB-UniRule"/>
</dbReference>
<dbReference type="GO" id="GO:0006508">
    <property type="term" value="P:proteolysis"/>
    <property type="evidence" value="ECO:0007669"/>
    <property type="project" value="InterPro"/>
</dbReference>
<dbReference type="GO" id="GO:0009432">
    <property type="term" value="P:SOS response"/>
    <property type="evidence" value="ECO:0007669"/>
    <property type="project" value="UniProtKB-UniRule"/>
</dbReference>
<dbReference type="CDD" id="cd06529">
    <property type="entry name" value="S24_LexA-like"/>
    <property type="match status" value="1"/>
</dbReference>
<dbReference type="FunFam" id="1.10.10.10:FF:000009">
    <property type="entry name" value="LexA repressor"/>
    <property type="match status" value="1"/>
</dbReference>
<dbReference type="FunFam" id="2.10.109.10:FF:000001">
    <property type="entry name" value="LexA repressor"/>
    <property type="match status" value="1"/>
</dbReference>
<dbReference type="Gene3D" id="2.10.109.10">
    <property type="entry name" value="Umud Fragment, subunit A"/>
    <property type="match status" value="1"/>
</dbReference>
<dbReference type="Gene3D" id="1.10.10.10">
    <property type="entry name" value="Winged helix-like DNA-binding domain superfamily/Winged helix DNA-binding domain"/>
    <property type="match status" value="1"/>
</dbReference>
<dbReference type="HAMAP" id="MF_00015">
    <property type="entry name" value="LexA"/>
    <property type="match status" value="1"/>
</dbReference>
<dbReference type="InterPro" id="IPR006200">
    <property type="entry name" value="LexA"/>
</dbReference>
<dbReference type="InterPro" id="IPR039418">
    <property type="entry name" value="LexA-like"/>
</dbReference>
<dbReference type="InterPro" id="IPR036286">
    <property type="entry name" value="LexA/Signal_pep-like_sf"/>
</dbReference>
<dbReference type="InterPro" id="IPR006199">
    <property type="entry name" value="LexA_DNA-bd_dom"/>
</dbReference>
<dbReference type="InterPro" id="IPR050077">
    <property type="entry name" value="LexA_repressor"/>
</dbReference>
<dbReference type="InterPro" id="IPR006197">
    <property type="entry name" value="Peptidase_S24_LexA"/>
</dbReference>
<dbReference type="InterPro" id="IPR015927">
    <property type="entry name" value="Peptidase_S24_S26A/B/C"/>
</dbReference>
<dbReference type="InterPro" id="IPR036388">
    <property type="entry name" value="WH-like_DNA-bd_sf"/>
</dbReference>
<dbReference type="InterPro" id="IPR036390">
    <property type="entry name" value="WH_DNA-bd_sf"/>
</dbReference>
<dbReference type="NCBIfam" id="TIGR00498">
    <property type="entry name" value="lexA"/>
    <property type="match status" value="1"/>
</dbReference>
<dbReference type="PANTHER" id="PTHR33516">
    <property type="entry name" value="LEXA REPRESSOR"/>
    <property type="match status" value="1"/>
</dbReference>
<dbReference type="PANTHER" id="PTHR33516:SF2">
    <property type="entry name" value="LEXA REPRESSOR-RELATED"/>
    <property type="match status" value="1"/>
</dbReference>
<dbReference type="Pfam" id="PF01726">
    <property type="entry name" value="LexA_DNA_bind"/>
    <property type="match status" value="1"/>
</dbReference>
<dbReference type="Pfam" id="PF00717">
    <property type="entry name" value="Peptidase_S24"/>
    <property type="match status" value="1"/>
</dbReference>
<dbReference type="PRINTS" id="PR00726">
    <property type="entry name" value="LEXASERPTASE"/>
</dbReference>
<dbReference type="SUPFAM" id="SSF51306">
    <property type="entry name" value="LexA/Signal peptidase"/>
    <property type="match status" value="1"/>
</dbReference>
<dbReference type="SUPFAM" id="SSF46785">
    <property type="entry name" value="Winged helix' DNA-binding domain"/>
    <property type="match status" value="1"/>
</dbReference>
<organism>
    <name type="scientific">Shewanella pealeana (strain ATCC 700345 / ANG-SQ1)</name>
    <dbReference type="NCBI Taxonomy" id="398579"/>
    <lineage>
        <taxon>Bacteria</taxon>
        <taxon>Pseudomonadati</taxon>
        <taxon>Pseudomonadota</taxon>
        <taxon>Gammaproteobacteria</taxon>
        <taxon>Alteromonadales</taxon>
        <taxon>Shewanellaceae</taxon>
        <taxon>Shewanella</taxon>
    </lineage>
</organism>
<accession>A8H9S0</accession>
<evidence type="ECO:0000255" key="1">
    <source>
        <dbReference type="HAMAP-Rule" id="MF_00015"/>
    </source>
</evidence>